<sequence>MARYIGPKAKLSRREGTDLFLKSARRSLADKCKLDSKPGQHGRISGARTSDYGTQLREKQKVKRIYGVLERQFRRYFAEADRRKGNTGETLLQLLESRLDNVVYRMGFGSTRAEARQLVSHKAITVNGIVANIPSQQVKAGDVVAIREKAKKQARIVEALSLAEQGGMPSWVAVDAKKFEGTFKQVPERADIAGDINESLIVELYSR</sequence>
<feature type="chain" id="PRO_0000132357" description="Small ribosomal subunit protein uS4">
    <location>
        <begin position="1"/>
        <end position="207"/>
    </location>
</feature>
<feature type="domain" description="S4 RNA-binding" evidence="1">
    <location>
        <begin position="97"/>
        <end position="160"/>
    </location>
</feature>
<gene>
    <name evidence="1" type="primary">rpsD</name>
    <name type="ordered locus">BPSL3188</name>
</gene>
<proteinExistence type="inferred from homology"/>
<comment type="function">
    <text evidence="1">One of the primary rRNA binding proteins, it binds directly to 16S rRNA where it nucleates assembly of the body of the 30S subunit.</text>
</comment>
<comment type="function">
    <text evidence="1">With S5 and S12 plays an important role in translational accuracy.</text>
</comment>
<comment type="subunit">
    <text evidence="1">Part of the 30S ribosomal subunit. Contacts protein S5. The interaction surface between S4 and S5 is involved in control of translational fidelity.</text>
</comment>
<comment type="similarity">
    <text evidence="1">Belongs to the universal ribosomal protein uS4 family.</text>
</comment>
<keyword id="KW-1185">Reference proteome</keyword>
<keyword id="KW-0687">Ribonucleoprotein</keyword>
<keyword id="KW-0689">Ribosomal protein</keyword>
<keyword id="KW-0694">RNA-binding</keyword>
<keyword id="KW-0699">rRNA-binding</keyword>
<protein>
    <recommendedName>
        <fullName evidence="1">Small ribosomal subunit protein uS4</fullName>
    </recommendedName>
    <alternativeName>
        <fullName evidence="2">30S ribosomal protein S4</fullName>
    </alternativeName>
</protein>
<reference key="1">
    <citation type="journal article" date="2004" name="Proc. Natl. Acad. Sci. U.S.A.">
        <title>Genomic plasticity of the causative agent of melioidosis, Burkholderia pseudomallei.</title>
        <authorList>
            <person name="Holden M.T.G."/>
            <person name="Titball R.W."/>
            <person name="Peacock S.J."/>
            <person name="Cerdeno-Tarraga A.-M."/>
            <person name="Atkins T."/>
            <person name="Crossman L.C."/>
            <person name="Pitt T."/>
            <person name="Churcher C."/>
            <person name="Mungall K.L."/>
            <person name="Bentley S.D."/>
            <person name="Sebaihia M."/>
            <person name="Thomson N.R."/>
            <person name="Bason N."/>
            <person name="Beacham I.R."/>
            <person name="Brooks K."/>
            <person name="Brown K.A."/>
            <person name="Brown N.F."/>
            <person name="Challis G.L."/>
            <person name="Cherevach I."/>
            <person name="Chillingworth T."/>
            <person name="Cronin A."/>
            <person name="Crossett B."/>
            <person name="Davis P."/>
            <person name="DeShazer D."/>
            <person name="Feltwell T."/>
            <person name="Fraser A."/>
            <person name="Hance Z."/>
            <person name="Hauser H."/>
            <person name="Holroyd S."/>
            <person name="Jagels K."/>
            <person name="Keith K.E."/>
            <person name="Maddison M."/>
            <person name="Moule S."/>
            <person name="Price C."/>
            <person name="Quail M.A."/>
            <person name="Rabbinowitsch E."/>
            <person name="Rutherford K."/>
            <person name="Sanders M."/>
            <person name="Simmonds M."/>
            <person name="Songsivilai S."/>
            <person name="Stevens K."/>
            <person name="Tumapa S."/>
            <person name="Vesaratchavest M."/>
            <person name="Whitehead S."/>
            <person name="Yeats C."/>
            <person name="Barrell B.G."/>
            <person name="Oyston P.C.F."/>
            <person name="Parkhill J."/>
        </authorList>
    </citation>
    <scope>NUCLEOTIDE SEQUENCE [LARGE SCALE GENOMIC DNA]</scope>
    <source>
        <strain>K96243</strain>
    </source>
</reference>
<organism>
    <name type="scientific">Burkholderia pseudomallei (strain K96243)</name>
    <dbReference type="NCBI Taxonomy" id="272560"/>
    <lineage>
        <taxon>Bacteria</taxon>
        <taxon>Pseudomonadati</taxon>
        <taxon>Pseudomonadota</taxon>
        <taxon>Betaproteobacteria</taxon>
        <taxon>Burkholderiales</taxon>
        <taxon>Burkholderiaceae</taxon>
        <taxon>Burkholderia</taxon>
        <taxon>pseudomallei group</taxon>
    </lineage>
</organism>
<accession>Q63Q36</accession>
<evidence type="ECO:0000255" key="1">
    <source>
        <dbReference type="HAMAP-Rule" id="MF_01306"/>
    </source>
</evidence>
<evidence type="ECO:0000305" key="2"/>
<dbReference type="EMBL" id="BX571965">
    <property type="protein sequence ID" value="CAH37199.1"/>
    <property type="molecule type" value="Genomic_DNA"/>
</dbReference>
<dbReference type="RefSeq" id="WP_004197926.1">
    <property type="nucleotide sequence ID" value="NZ_CP009538.1"/>
</dbReference>
<dbReference type="RefSeq" id="YP_109782.1">
    <property type="nucleotide sequence ID" value="NC_006350.1"/>
</dbReference>
<dbReference type="SMR" id="Q63Q36"/>
<dbReference type="STRING" id="272560.BPSL3188"/>
<dbReference type="GeneID" id="93061807"/>
<dbReference type="KEGG" id="bps:BPSL3188"/>
<dbReference type="PATRIC" id="fig|272560.51.peg.2050"/>
<dbReference type="eggNOG" id="COG0522">
    <property type="taxonomic scope" value="Bacteria"/>
</dbReference>
<dbReference type="Proteomes" id="UP000000605">
    <property type="component" value="Chromosome 1"/>
</dbReference>
<dbReference type="GO" id="GO:0015935">
    <property type="term" value="C:small ribosomal subunit"/>
    <property type="evidence" value="ECO:0007669"/>
    <property type="project" value="InterPro"/>
</dbReference>
<dbReference type="GO" id="GO:0019843">
    <property type="term" value="F:rRNA binding"/>
    <property type="evidence" value="ECO:0007669"/>
    <property type="project" value="UniProtKB-UniRule"/>
</dbReference>
<dbReference type="GO" id="GO:0003735">
    <property type="term" value="F:structural constituent of ribosome"/>
    <property type="evidence" value="ECO:0007669"/>
    <property type="project" value="InterPro"/>
</dbReference>
<dbReference type="GO" id="GO:0042274">
    <property type="term" value="P:ribosomal small subunit biogenesis"/>
    <property type="evidence" value="ECO:0007669"/>
    <property type="project" value="TreeGrafter"/>
</dbReference>
<dbReference type="GO" id="GO:0006412">
    <property type="term" value="P:translation"/>
    <property type="evidence" value="ECO:0007669"/>
    <property type="project" value="UniProtKB-UniRule"/>
</dbReference>
<dbReference type="CDD" id="cd00165">
    <property type="entry name" value="S4"/>
    <property type="match status" value="1"/>
</dbReference>
<dbReference type="FunFam" id="1.10.1050.10:FF:000001">
    <property type="entry name" value="30S ribosomal protein S4"/>
    <property type="match status" value="1"/>
</dbReference>
<dbReference type="FunFam" id="3.10.290.10:FF:000001">
    <property type="entry name" value="30S ribosomal protein S4"/>
    <property type="match status" value="1"/>
</dbReference>
<dbReference type="Gene3D" id="1.10.1050.10">
    <property type="entry name" value="Ribosomal Protein S4 Delta 41, Chain A, domain 1"/>
    <property type="match status" value="1"/>
</dbReference>
<dbReference type="Gene3D" id="3.10.290.10">
    <property type="entry name" value="RNA-binding S4 domain"/>
    <property type="match status" value="1"/>
</dbReference>
<dbReference type="HAMAP" id="MF_01306_B">
    <property type="entry name" value="Ribosomal_uS4_B"/>
    <property type="match status" value="1"/>
</dbReference>
<dbReference type="InterPro" id="IPR022801">
    <property type="entry name" value="Ribosomal_uS4"/>
</dbReference>
<dbReference type="InterPro" id="IPR005709">
    <property type="entry name" value="Ribosomal_uS4_bac-type"/>
</dbReference>
<dbReference type="InterPro" id="IPR018079">
    <property type="entry name" value="Ribosomal_uS4_CS"/>
</dbReference>
<dbReference type="InterPro" id="IPR001912">
    <property type="entry name" value="Ribosomal_uS4_N"/>
</dbReference>
<dbReference type="InterPro" id="IPR002942">
    <property type="entry name" value="S4_RNA-bd"/>
</dbReference>
<dbReference type="InterPro" id="IPR036986">
    <property type="entry name" value="S4_RNA-bd_sf"/>
</dbReference>
<dbReference type="NCBIfam" id="NF003717">
    <property type="entry name" value="PRK05327.1"/>
    <property type="match status" value="1"/>
</dbReference>
<dbReference type="NCBIfam" id="TIGR01017">
    <property type="entry name" value="rpsD_bact"/>
    <property type="match status" value="1"/>
</dbReference>
<dbReference type="PANTHER" id="PTHR11831">
    <property type="entry name" value="30S 40S RIBOSOMAL PROTEIN"/>
    <property type="match status" value="1"/>
</dbReference>
<dbReference type="PANTHER" id="PTHR11831:SF4">
    <property type="entry name" value="SMALL RIBOSOMAL SUBUNIT PROTEIN US4M"/>
    <property type="match status" value="1"/>
</dbReference>
<dbReference type="Pfam" id="PF00163">
    <property type="entry name" value="Ribosomal_S4"/>
    <property type="match status" value="1"/>
</dbReference>
<dbReference type="Pfam" id="PF01479">
    <property type="entry name" value="S4"/>
    <property type="match status" value="1"/>
</dbReference>
<dbReference type="SMART" id="SM01390">
    <property type="entry name" value="Ribosomal_S4"/>
    <property type="match status" value="1"/>
</dbReference>
<dbReference type="SMART" id="SM00363">
    <property type="entry name" value="S4"/>
    <property type="match status" value="1"/>
</dbReference>
<dbReference type="SUPFAM" id="SSF55174">
    <property type="entry name" value="Alpha-L RNA-binding motif"/>
    <property type="match status" value="1"/>
</dbReference>
<dbReference type="PROSITE" id="PS00632">
    <property type="entry name" value="RIBOSOMAL_S4"/>
    <property type="match status" value="1"/>
</dbReference>
<dbReference type="PROSITE" id="PS50889">
    <property type="entry name" value="S4"/>
    <property type="match status" value="1"/>
</dbReference>
<name>RS4_BURPS</name>